<protein>
    <recommendedName>
        <fullName>Ubiquitin carboxyl-terminal hydrolase 40</fullName>
        <ecNumber>3.4.19.12</ecNumber>
    </recommendedName>
    <alternativeName>
        <fullName>Deubiquitinating enzyme 40</fullName>
    </alternativeName>
    <alternativeName>
        <fullName>Ubiquitin thioesterase 40</fullName>
    </alternativeName>
    <alternativeName>
        <fullName>Ubiquitin-specific-processing protease 40</fullName>
    </alternativeName>
</protein>
<name>UBP40_MOUSE</name>
<sequence>MFGNLFEEDYSSVSSSQYGRGKKLKTKGLEPPAPREFTNLSGIRNQGGTCYLSSLLQTLHFTPEFREALFSLGPEELGSLEDKDKPDAKVRIIPLQLQRLFAQLLLLDQEAASTIDLTDSFGWTNDEEMRQHDVQELNRILFSALETSLVGTSGHDLIHRLYHGTIVNQIVCKECKNISERQEDFLDLTVAVKNVSGLEDELCNMYVEEEIFDYDNLYHCGTCDRLVKAAKSAKLRKLPPFLTISLLRFNFDFVKCERYKDTSCYTFPLRINLKPFCEQSELDDMEYMYDLFSVIIHKGGCYGGHYHVYIKDVDHLGNWQCQEEISDTNVNVKAPQSEEEANDPLVVLKTILLQEEANQIPVDQLGQKLLKKTGISWNKKYRKQHGPLRKFLQLHPQIFLLSTDESTVSLLRNHLTQAPSDLQSCEQILHTLASESPGLNDDTSCPHWFDINDSKVHPIREKDITQQFQGKESAYMLFYRKATLQRPPEARANPRYRVPCHLLKEMDAANILLQMRRAECDSANSTFELHLHLGPHYRFFNGALHPAVSETESVWDLTFDKRKTLGDLRQSIFQLLECWEGDMVLSVAKRVPAGLHVYHTLDGDDLTLCEAEVADGEDIFVWNGVEVGGVQIQTGFDCEPLLLNILHLELSGEGSKCEQLVESPHVFPANAEVGAVFTALGTPAGAILMNSVESADGECWTAVPKEDMKKTFREQGLRNGSLILVQDSDSDNNSLLPKQGRWTNSMNELNWLQVKNFCQSESEEKQVQIAVTMHTVVFDIRIKAIKELKLMKELAENSCLRPIDRNGKLLCPVPDSSTLEEAEVKMGSSVGLCLGKAPTSSQLFLFFALGTDIHPGAEMDIIVEETLSVRDCLKIMLEKSGQQGEIWHLRKMDWCYEAGEPLCEEDATLKELMIRSGDTLLLTEGKLPPPGHLKMPIWWYQPARLSGHCESRDHLNCAFSQDSTWRAAPTQGAPGPEPAEVSLLYLGDMEISEEATLVELKSQALALPSVSKLAVQSTALLRVWTVESKRPSRLLRTNWRQLKEYRLGRRAELCLELLQKEEDLGPRDVLLRTQLRIPGERAYSLATDLIWDTTRGWTAGSLRQRVADFYSLPVEKIEIAKYFPEKFEWLPISSWNQQVAKRKKKKNQDTLQGGPYYLKDGDTIGIKNLLFDDNDDFSTIRDDIGKENQKRLALEKKKSREVHRAQSSDLFSNAGVPARFRGPEASLSIHVASFR</sequence>
<proteinExistence type="evidence at protein level"/>
<accession>Q8BWR4</accession>
<accession>Q08EB7</accession>
<accession>Q148V0</accession>
<accession>Q3TLV1</accession>
<accession>Q3TMN0</accession>
<accession>Q3V1R4</accession>
<accession>Q5EBN6</accession>
<dbReference type="EC" id="3.4.19.12"/>
<dbReference type="EMBL" id="AK050239">
    <property type="protein sequence ID" value="BAC34140.1"/>
    <property type="molecule type" value="mRNA"/>
</dbReference>
<dbReference type="EMBL" id="AK132295">
    <property type="protein sequence ID" value="BAE21086.1"/>
    <property type="molecule type" value="mRNA"/>
</dbReference>
<dbReference type="EMBL" id="AK165849">
    <property type="protein sequence ID" value="BAE38411.1"/>
    <property type="molecule type" value="mRNA"/>
</dbReference>
<dbReference type="EMBL" id="AK166303">
    <property type="protein sequence ID" value="BAE38691.1"/>
    <property type="molecule type" value="mRNA"/>
</dbReference>
<dbReference type="EMBL" id="BC089376">
    <property type="protein sequence ID" value="AAH89376.1"/>
    <property type="molecule type" value="mRNA"/>
</dbReference>
<dbReference type="EMBL" id="BC117957">
    <property type="protein sequence ID" value="AAI17958.1"/>
    <property type="molecule type" value="mRNA"/>
</dbReference>
<dbReference type="EMBL" id="BC117958">
    <property type="protein sequence ID" value="AAI17959.1"/>
    <property type="molecule type" value="mRNA"/>
</dbReference>
<dbReference type="CCDS" id="CCDS15137.1">
    <molecule id="Q8BWR4-2"/>
</dbReference>
<dbReference type="CCDS" id="CCDS78645.1">
    <molecule id="Q8BWR4-1"/>
</dbReference>
<dbReference type="RefSeq" id="NP_001028463.1">
    <molecule id="Q8BWR4-2"/>
    <property type="nucleotide sequence ID" value="NM_001033291.3"/>
</dbReference>
<dbReference type="RefSeq" id="NP_001185502.1">
    <molecule id="Q8BWR4-1"/>
    <property type="nucleotide sequence ID" value="NM_001198573.2"/>
</dbReference>
<dbReference type="BioGRID" id="230617">
    <property type="interactions" value="4"/>
</dbReference>
<dbReference type="FunCoup" id="Q8BWR4">
    <property type="interactions" value="3911"/>
</dbReference>
<dbReference type="STRING" id="10090.ENSMUSP00000140107"/>
<dbReference type="MEROPS" id="C19.069"/>
<dbReference type="iPTMnet" id="Q8BWR4"/>
<dbReference type="PhosphoSitePlus" id="Q8BWR4"/>
<dbReference type="jPOST" id="Q8BWR4"/>
<dbReference type="PaxDb" id="10090-ENSMUSP00000038533"/>
<dbReference type="PeptideAtlas" id="Q8BWR4"/>
<dbReference type="ProteomicsDB" id="297700">
    <molecule id="Q8BWR4-1"/>
</dbReference>
<dbReference type="ProteomicsDB" id="297701">
    <molecule id="Q8BWR4-2"/>
</dbReference>
<dbReference type="ProteomicsDB" id="297702">
    <molecule id="Q8BWR4-3"/>
</dbReference>
<dbReference type="ProteomicsDB" id="297703">
    <molecule id="Q8BWR4-4"/>
</dbReference>
<dbReference type="Pumba" id="Q8BWR4"/>
<dbReference type="Antibodypedia" id="965">
    <property type="antibodies" value="131 antibodies from 23 providers"/>
</dbReference>
<dbReference type="DNASU" id="227334"/>
<dbReference type="Ensembl" id="ENSMUST00000040783.11">
    <molecule id="Q8BWR4-2"/>
    <property type="protein sequence ID" value="ENSMUSP00000038533.5"/>
    <property type="gene ID" value="ENSMUSG00000005501.15"/>
</dbReference>
<dbReference type="Ensembl" id="ENSMUST00000187758.7">
    <molecule id="Q8BWR4-1"/>
    <property type="protein sequence ID" value="ENSMUSP00000140107.2"/>
    <property type="gene ID" value="ENSMUSG00000005501.15"/>
</dbReference>
<dbReference type="GeneID" id="227334"/>
<dbReference type="KEGG" id="mmu:227334"/>
<dbReference type="UCSC" id="uc007bxw.1">
    <molecule id="Q8BWR4-2"/>
    <property type="organism name" value="mouse"/>
</dbReference>
<dbReference type="UCSC" id="uc007bxx.1">
    <molecule id="Q8BWR4-1"/>
    <property type="organism name" value="mouse"/>
</dbReference>
<dbReference type="UCSC" id="uc007bxz.1">
    <molecule id="Q8BWR4-4"/>
    <property type="organism name" value="mouse"/>
</dbReference>
<dbReference type="AGR" id="MGI:2443184"/>
<dbReference type="CTD" id="55230"/>
<dbReference type="MGI" id="MGI:2443184">
    <property type="gene designation" value="Usp40"/>
</dbReference>
<dbReference type="VEuPathDB" id="HostDB:ENSMUSG00000005501"/>
<dbReference type="eggNOG" id="KOG1863">
    <property type="taxonomic scope" value="Eukaryota"/>
</dbReference>
<dbReference type="GeneTree" id="ENSGT00940000157267"/>
<dbReference type="HOGENOM" id="CLU_009719_0_0_1"/>
<dbReference type="InParanoid" id="Q8BWR4"/>
<dbReference type="OMA" id="PEGSHWF"/>
<dbReference type="OrthoDB" id="289038at2759"/>
<dbReference type="PhylomeDB" id="Q8BWR4"/>
<dbReference type="TreeFam" id="TF106281"/>
<dbReference type="BioGRID-ORCS" id="227334">
    <property type="hits" value="1 hit in 78 CRISPR screens"/>
</dbReference>
<dbReference type="ChiTaRS" id="Usp40">
    <property type="organism name" value="mouse"/>
</dbReference>
<dbReference type="PRO" id="PR:Q8BWR4"/>
<dbReference type="Proteomes" id="UP000000589">
    <property type="component" value="Chromosome 1"/>
</dbReference>
<dbReference type="RNAct" id="Q8BWR4">
    <property type="molecule type" value="protein"/>
</dbReference>
<dbReference type="Bgee" id="ENSMUSG00000005501">
    <property type="expression patterns" value="Expressed in humerus cartilage element and 211 other cell types or tissues"/>
</dbReference>
<dbReference type="ExpressionAtlas" id="Q8BWR4">
    <property type="expression patterns" value="baseline and differential"/>
</dbReference>
<dbReference type="GO" id="GO:0004843">
    <property type="term" value="F:cysteine-type deubiquitinase activity"/>
    <property type="evidence" value="ECO:0007669"/>
    <property type="project" value="UniProtKB-EC"/>
</dbReference>
<dbReference type="GO" id="GO:0016579">
    <property type="term" value="P:protein deubiquitination"/>
    <property type="evidence" value="ECO:0007669"/>
    <property type="project" value="InterPro"/>
</dbReference>
<dbReference type="GO" id="GO:0006508">
    <property type="term" value="P:proteolysis"/>
    <property type="evidence" value="ECO:0007669"/>
    <property type="project" value="UniProtKB-KW"/>
</dbReference>
<dbReference type="CDD" id="cd02659">
    <property type="entry name" value="peptidase_C19C"/>
    <property type="match status" value="1"/>
</dbReference>
<dbReference type="FunFam" id="3.90.70.10:FF:000043">
    <property type="entry name" value="Ubiquitin carboxyl-terminal hydrolase 40"/>
    <property type="match status" value="1"/>
</dbReference>
<dbReference type="FunFam" id="3.90.70.10:FF:000101">
    <property type="entry name" value="Ubiquitin specific peptidase 40"/>
    <property type="match status" value="1"/>
</dbReference>
<dbReference type="Gene3D" id="3.90.70.10">
    <property type="entry name" value="Cysteine proteinases"/>
    <property type="match status" value="2"/>
</dbReference>
<dbReference type="InterPro" id="IPR038765">
    <property type="entry name" value="Papain-like_cys_pep_sf"/>
</dbReference>
<dbReference type="InterPro" id="IPR050164">
    <property type="entry name" value="Peptidase_C19"/>
</dbReference>
<dbReference type="InterPro" id="IPR001394">
    <property type="entry name" value="Peptidase_C19_UCH"/>
</dbReference>
<dbReference type="InterPro" id="IPR018200">
    <property type="entry name" value="USP_CS"/>
</dbReference>
<dbReference type="InterPro" id="IPR028889">
    <property type="entry name" value="USP_dom"/>
</dbReference>
<dbReference type="PANTHER" id="PTHR24006">
    <property type="entry name" value="UBIQUITIN CARBOXYL-TERMINAL HYDROLASE"/>
    <property type="match status" value="1"/>
</dbReference>
<dbReference type="PANTHER" id="PTHR24006:SF842">
    <property type="entry name" value="UBIQUITIN CARBOXYL-TERMINAL HYDROLASE 40"/>
    <property type="match status" value="1"/>
</dbReference>
<dbReference type="Pfam" id="PF00443">
    <property type="entry name" value="UCH"/>
    <property type="match status" value="1"/>
</dbReference>
<dbReference type="SUPFAM" id="SSF54001">
    <property type="entry name" value="Cysteine proteinases"/>
    <property type="match status" value="1"/>
</dbReference>
<dbReference type="PROSITE" id="PS00972">
    <property type="entry name" value="USP_1"/>
    <property type="match status" value="1"/>
</dbReference>
<dbReference type="PROSITE" id="PS00973">
    <property type="entry name" value="USP_2"/>
    <property type="match status" value="1"/>
</dbReference>
<dbReference type="PROSITE" id="PS50235">
    <property type="entry name" value="USP_3"/>
    <property type="match status" value="1"/>
</dbReference>
<keyword id="KW-0025">Alternative splicing</keyword>
<keyword id="KW-0378">Hydrolase</keyword>
<keyword id="KW-0645">Protease</keyword>
<keyword id="KW-1185">Reference proteome</keyword>
<keyword id="KW-0788">Thiol protease</keyword>
<keyword id="KW-0833">Ubl conjugation pathway</keyword>
<feature type="chain" id="PRO_0000080671" description="Ubiquitin carboxyl-terminal hydrolase 40">
    <location>
        <begin position="1"/>
        <end position="1235"/>
    </location>
</feature>
<feature type="domain" description="USP">
    <location>
        <begin position="41"/>
        <end position="482"/>
    </location>
</feature>
<feature type="active site" description="Nucleophile" evidence="1 2">
    <location>
        <position position="50"/>
    </location>
</feature>
<feature type="active site" description="Proton acceptor" evidence="1 2">
    <location>
        <position position="305"/>
    </location>
</feature>
<feature type="splice variant" id="VSP_022171" description="In isoform 3." evidence="3">
    <location>
        <begin position="1"/>
        <end position="128"/>
    </location>
</feature>
<feature type="splice variant" id="VSP_022172" description="In isoform 4." evidence="4">
    <original>ARANPRYRVPCH</original>
    <variation>GMENKKCSALLC</variation>
    <location>
        <begin position="490"/>
        <end position="501"/>
    </location>
</feature>
<feature type="splice variant" id="VSP_022173" description="In isoform 4." evidence="4">
    <location>
        <begin position="502"/>
        <end position="1235"/>
    </location>
</feature>
<feature type="splice variant" id="VSP_022174" description="In isoform 2." evidence="4">
    <location>
        <begin position="795"/>
        <end position="883"/>
    </location>
</feature>
<feature type="sequence conflict" description="In Ref. 1; BAE38691." evidence="5" ref="1">
    <original>E</original>
    <variation>A</variation>
    <location>
        <position position="201"/>
    </location>
</feature>
<feature type="sequence conflict" description="In Ref. 2; AAH89376." evidence="5" ref="2">
    <original>A</original>
    <variation>E</variation>
    <location>
        <position position="943"/>
    </location>
</feature>
<feature type="sequence conflict" description="In Ref. 1; BAE38411." evidence="5" ref="1">
    <original>S</original>
    <variation>N</variation>
    <location>
        <position position="1134"/>
    </location>
</feature>
<feature type="sequence conflict" description="In Ref. 2; AAH89376." evidence="5" ref="2">
    <original>R</original>
    <variation>K</variation>
    <location>
        <position position="1142"/>
    </location>
</feature>
<reference key="1">
    <citation type="journal article" date="2005" name="Science">
        <title>The transcriptional landscape of the mammalian genome.</title>
        <authorList>
            <person name="Carninci P."/>
            <person name="Kasukawa T."/>
            <person name="Katayama S."/>
            <person name="Gough J."/>
            <person name="Frith M.C."/>
            <person name="Maeda N."/>
            <person name="Oyama R."/>
            <person name="Ravasi T."/>
            <person name="Lenhard B."/>
            <person name="Wells C."/>
            <person name="Kodzius R."/>
            <person name="Shimokawa K."/>
            <person name="Bajic V.B."/>
            <person name="Brenner S.E."/>
            <person name="Batalov S."/>
            <person name="Forrest A.R."/>
            <person name="Zavolan M."/>
            <person name="Davis M.J."/>
            <person name="Wilming L.G."/>
            <person name="Aidinis V."/>
            <person name="Allen J.E."/>
            <person name="Ambesi-Impiombato A."/>
            <person name="Apweiler R."/>
            <person name="Aturaliya R.N."/>
            <person name="Bailey T.L."/>
            <person name="Bansal M."/>
            <person name="Baxter L."/>
            <person name="Beisel K.W."/>
            <person name="Bersano T."/>
            <person name="Bono H."/>
            <person name="Chalk A.M."/>
            <person name="Chiu K.P."/>
            <person name="Choudhary V."/>
            <person name="Christoffels A."/>
            <person name="Clutterbuck D.R."/>
            <person name="Crowe M.L."/>
            <person name="Dalla E."/>
            <person name="Dalrymple B.P."/>
            <person name="de Bono B."/>
            <person name="Della Gatta G."/>
            <person name="di Bernardo D."/>
            <person name="Down T."/>
            <person name="Engstrom P."/>
            <person name="Fagiolini M."/>
            <person name="Faulkner G."/>
            <person name="Fletcher C.F."/>
            <person name="Fukushima T."/>
            <person name="Furuno M."/>
            <person name="Futaki S."/>
            <person name="Gariboldi M."/>
            <person name="Georgii-Hemming P."/>
            <person name="Gingeras T.R."/>
            <person name="Gojobori T."/>
            <person name="Green R.E."/>
            <person name="Gustincich S."/>
            <person name="Harbers M."/>
            <person name="Hayashi Y."/>
            <person name="Hensch T.K."/>
            <person name="Hirokawa N."/>
            <person name="Hill D."/>
            <person name="Huminiecki L."/>
            <person name="Iacono M."/>
            <person name="Ikeo K."/>
            <person name="Iwama A."/>
            <person name="Ishikawa T."/>
            <person name="Jakt M."/>
            <person name="Kanapin A."/>
            <person name="Katoh M."/>
            <person name="Kawasawa Y."/>
            <person name="Kelso J."/>
            <person name="Kitamura H."/>
            <person name="Kitano H."/>
            <person name="Kollias G."/>
            <person name="Krishnan S.P."/>
            <person name="Kruger A."/>
            <person name="Kummerfeld S.K."/>
            <person name="Kurochkin I.V."/>
            <person name="Lareau L.F."/>
            <person name="Lazarevic D."/>
            <person name="Lipovich L."/>
            <person name="Liu J."/>
            <person name="Liuni S."/>
            <person name="McWilliam S."/>
            <person name="Madan Babu M."/>
            <person name="Madera M."/>
            <person name="Marchionni L."/>
            <person name="Matsuda H."/>
            <person name="Matsuzawa S."/>
            <person name="Miki H."/>
            <person name="Mignone F."/>
            <person name="Miyake S."/>
            <person name="Morris K."/>
            <person name="Mottagui-Tabar S."/>
            <person name="Mulder N."/>
            <person name="Nakano N."/>
            <person name="Nakauchi H."/>
            <person name="Ng P."/>
            <person name="Nilsson R."/>
            <person name="Nishiguchi S."/>
            <person name="Nishikawa S."/>
            <person name="Nori F."/>
            <person name="Ohara O."/>
            <person name="Okazaki Y."/>
            <person name="Orlando V."/>
            <person name="Pang K.C."/>
            <person name="Pavan W.J."/>
            <person name="Pavesi G."/>
            <person name="Pesole G."/>
            <person name="Petrovsky N."/>
            <person name="Piazza S."/>
            <person name="Reed J."/>
            <person name="Reid J.F."/>
            <person name="Ring B.Z."/>
            <person name="Ringwald M."/>
            <person name="Rost B."/>
            <person name="Ruan Y."/>
            <person name="Salzberg S.L."/>
            <person name="Sandelin A."/>
            <person name="Schneider C."/>
            <person name="Schoenbach C."/>
            <person name="Sekiguchi K."/>
            <person name="Semple C.A."/>
            <person name="Seno S."/>
            <person name="Sessa L."/>
            <person name="Sheng Y."/>
            <person name="Shibata Y."/>
            <person name="Shimada H."/>
            <person name="Shimada K."/>
            <person name="Silva D."/>
            <person name="Sinclair B."/>
            <person name="Sperling S."/>
            <person name="Stupka E."/>
            <person name="Sugiura K."/>
            <person name="Sultana R."/>
            <person name="Takenaka Y."/>
            <person name="Taki K."/>
            <person name="Tammoja K."/>
            <person name="Tan S.L."/>
            <person name="Tang S."/>
            <person name="Taylor M.S."/>
            <person name="Tegner J."/>
            <person name="Teichmann S.A."/>
            <person name="Ueda H.R."/>
            <person name="van Nimwegen E."/>
            <person name="Verardo R."/>
            <person name="Wei C.L."/>
            <person name="Yagi K."/>
            <person name="Yamanishi H."/>
            <person name="Zabarovsky E."/>
            <person name="Zhu S."/>
            <person name="Zimmer A."/>
            <person name="Hide W."/>
            <person name="Bult C."/>
            <person name="Grimmond S.M."/>
            <person name="Teasdale R.D."/>
            <person name="Liu E.T."/>
            <person name="Brusic V."/>
            <person name="Quackenbush J."/>
            <person name="Wahlestedt C."/>
            <person name="Mattick J.S."/>
            <person name="Hume D.A."/>
            <person name="Kai C."/>
            <person name="Sasaki D."/>
            <person name="Tomaru Y."/>
            <person name="Fukuda S."/>
            <person name="Kanamori-Katayama M."/>
            <person name="Suzuki M."/>
            <person name="Aoki J."/>
            <person name="Arakawa T."/>
            <person name="Iida J."/>
            <person name="Imamura K."/>
            <person name="Itoh M."/>
            <person name="Kato T."/>
            <person name="Kawaji H."/>
            <person name="Kawagashira N."/>
            <person name="Kawashima T."/>
            <person name="Kojima M."/>
            <person name="Kondo S."/>
            <person name="Konno H."/>
            <person name="Nakano K."/>
            <person name="Ninomiya N."/>
            <person name="Nishio T."/>
            <person name="Okada M."/>
            <person name="Plessy C."/>
            <person name="Shibata K."/>
            <person name="Shiraki T."/>
            <person name="Suzuki S."/>
            <person name="Tagami M."/>
            <person name="Waki K."/>
            <person name="Watahiki A."/>
            <person name="Okamura-Oho Y."/>
            <person name="Suzuki H."/>
            <person name="Kawai J."/>
            <person name="Hayashizaki Y."/>
        </authorList>
    </citation>
    <scope>NUCLEOTIDE SEQUENCE [LARGE SCALE MRNA] (ISOFORMS 2 AND 4)</scope>
    <scope>NUCLEOTIDE SEQUENCE [LARGE SCALE MRNA] OF 1-1140 AND 967-1235 (ISOFORM 1)</scope>
    <source>
        <strain>C57BL/6J</strain>
        <tissue>Embryo</tissue>
        <tissue>Liver</tissue>
        <tissue>Lung</tissue>
        <tissue>Mammary gland</tissue>
    </source>
</reference>
<reference key="2">
    <citation type="journal article" date="2004" name="Genome Res.">
        <title>The status, quality, and expansion of the NIH full-length cDNA project: the Mammalian Gene Collection (MGC).</title>
        <authorList>
            <consortium name="The MGC Project Team"/>
        </authorList>
    </citation>
    <scope>NUCLEOTIDE SEQUENCE [LARGE SCALE MRNA] (ISOFORMS 1 AND 3)</scope>
    <source>
        <strain>C57BL/6J</strain>
        <tissue>Eye</tissue>
    </source>
</reference>
<reference key="3">
    <citation type="journal article" date="2007" name="Proc. Natl. Acad. Sci. U.S.A.">
        <title>Large-scale phosphorylation analysis of mouse liver.</title>
        <authorList>
            <person name="Villen J."/>
            <person name="Beausoleil S.A."/>
            <person name="Gerber S.A."/>
            <person name="Gygi S.P."/>
        </authorList>
    </citation>
    <scope>IDENTIFICATION BY MASS SPECTROMETRY [LARGE SCALE ANALYSIS]</scope>
    <source>
        <tissue>Liver</tissue>
    </source>
</reference>
<reference key="4">
    <citation type="journal article" date="2010" name="Cell">
        <title>A tissue-specific atlas of mouse protein phosphorylation and expression.</title>
        <authorList>
            <person name="Huttlin E.L."/>
            <person name="Jedrychowski M.P."/>
            <person name="Elias J.E."/>
            <person name="Goswami T."/>
            <person name="Rad R."/>
            <person name="Beausoleil S.A."/>
            <person name="Villen J."/>
            <person name="Haas W."/>
            <person name="Sowa M.E."/>
            <person name="Gygi S.P."/>
        </authorList>
    </citation>
    <scope>IDENTIFICATION BY MASS SPECTROMETRY [LARGE SCALE ANALYSIS]</scope>
    <source>
        <tissue>Brown adipose tissue</tissue>
        <tissue>Pancreas</tissue>
        <tissue>Testis</tissue>
    </source>
</reference>
<gene>
    <name type="primary">Usp40</name>
</gene>
<evidence type="ECO:0000255" key="1">
    <source>
        <dbReference type="PROSITE-ProRule" id="PRU10092"/>
    </source>
</evidence>
<evidence type="ECO:0000255" key="2">
    <source>
        <dbReference type="PROSITE-ProRule" id="PRU10093"/>
    </source>
</evidence>
<evidence type="ECO:0000303" key="3">
    <source>
    </source>
</evidence>
<evidence type="ECO:0000303" key="4">
    <source>
    </source>
</evidence>
<evidence type="ECO:0000305" key="5"/>
<comment type="catalytic activity">
    <reaction>
        <text>Thiol-dependent hydrolysis of ester, thioester, amide, peptide and isopeptide bonds formed by the C-terminal Gly of ubiquitin (a 76-residue protein attached to proteins as an intracellular targeting signal).</text>
        <dbReference type="EC" id="3.4.19.12"/>
    </reaction>
</comment>
<comment type="alternative products">
    <event type="alternative splicing"/>
    <isoform>
        <id>Q8BWR4-1</id>
        <name>1</name>
        <sequence type="displayed"/>
    </isoform>
    <isoform>
        <id>Q8BWR4-2</id>
        <name>2</name>
        <sequence type="described" ref="VSP_022174"/>
    </isoform>
    <isoform>
        <id>Q8BWR4-3</id>
        <name>3</name>
        <sequence type="described" ref="VSP_022171"/>
    </isoform>
    <isoform>
        <id>Q8BWR4-4</id>
        <name>4</name>
        <sequence type="described" ref="VSP_022172 VSP_022173"/>
    </isoform>
</comment>
<comment type="similarity">
    <text evidence="5">Belongs to the peptidase C19 family.</text>
</comment>
<organism>
    <name type="scientific">Mus musculus</name>
    <name type="common">Mouse</name>
    <dbReference type="NCBI Taxonomy" id="10090"/>
    <lineage>
        <taxon>Eukaryota</taxon>
        <taxon>Metazoa</taxon>
        <taxon>Chordata</taxon>
        <taxon>Craniata</taxon>
        <taxon>Vertebrata</taxon>
        <taxon>Euteleostomi</taxon>
        <taxon>Mammalia</taxon>
        <taxon>Eutheria</taxon>
        <taxon>Euarchontoglires</taxon>
        <taxon>Glires</taxon>
        <taxon>Rodentia</taxon>
        <taxon>Myomorpha</taxon>
        <taxon>Muroidea</taxon>
        <taxon>Muridae</taxon>
        <taxon>Murinae</taxon>
        <taxon>Mus</taxon>
        <taxon>Mus</taxon>
    </lineage>
</organism>